<gene>
    <name type="primary">MT-CYB</name>
    <name type="synonym">COB</name>
    <name type="synonym">CYTB</name>
    <name type="synonym">MTCYB</name>
</gene>
<protein>
    <recommendedName>
        <fullName>Cytochrome b</fullName>
    </recommendedName>
    <alternativeName>
        <fullName>Complex III subunit 3</fullName>
    </alternativeName>
    <alternativeName>
        <fullName>Complex III subunit III</fullName>
    </alternativeName>
    <alternativeName>
        <fullName>Cytochrome b-c1 complex subunit 3</fullName>
    </alternativeName>
    <alternativeName>
        <fullName>Ubiquinol-cytochrome-c reductase complex cytochrome b subunit</fullName>
    </alternativeName>
</protein>
<feature type="chain" id="PRO_0000060776" description="Cytochrome b">
    <location>
        <begin position="1"/>
        <end position="380"/>
    </location>
</feature>
<feature type="transmembrane region" description="Helical" evidence="5 6 7 8 19">
    <location>
        <begin position="34"/>
        <end position="54"/>
    </location>
</feature>
<feature type="transmembrane region" description="Helical" evidence="5 6 7 8 19">
    <location>
        <begin position="78"/>
        <end position="99"/>
    </location>
</feature>
<feature type="transmembrane region" description="Helical" evidence="5 6 7 8 19">
    <location>
        <begin position="114"/>
        <end position="134"/>
    </location>
</feature>
<feature type="transmembrane region" description="Helical" evidence="5 6 7 8 19">
    <location>
        <begin position="179"/>
        <end position="199"/>
    </location>
</feature>
<feature type="transmembrane region" description="Helical" evidence="5 6 7 8 19">
    <location>
        <begin position="227"/>
        <end position="247"/>
    </location>
</feature>
<feature type="transmembrane region" description="Helical" evidence="5 6 7 8 19">
    <location>
        <begin position="289"/>
        <end position="309"/>
    </location>
</feature>
<feature type="transmembrane region" description="Helical" evidence="5 6 7 8 19">
    <location>
        <begin position="321"/>
        <end position="341"/>
    </location>
</feature>
<feature type="transmembrane region" description="Helical" evidence="5 6 7 8 19">
    <location>
        <begin position="348"/>
        <end position="368"/>
    </location>
</feature>
<feature type="binding site" description="axial binding residue" evidence="4 5 6 7 8 10 11 12 14 15 16 17 18 19 20 21 22 23 24 25">
    <location>
        <position position="84"/>
    </location>
    <ligand>
        <name>heme b</name>
        <dbReference type="ChEBI" id="CHEBI:60344"/>
        <label>b562</label>
    </ligand>
    <ligandPart>
        <name>Fe</name>
        <dbReference type="ChEBI" id="CHEBI:18248"/>
    </ligandPart>
</feature>
<feature type="binding site" description="axial binding residue" evidence="5 6 7 8 10 11 12 13 14 15 16 17 18 19 20 21 22 23 24 25">
    <location>
        <position position="98"/>
    </location>
    <ligand>
        <name>heme b</name>
        <dbReference type="ChEBI" id="CHEBI:60344"/>
        <label>b566</label>
    </ligand>
    <ligandPart>
        <name>Fe</name>
        <dbReference type="ChEBI" id="CHEBI:18248"/>
    </ligandPart>
</feature>
<feature type="binding site" description="axial binding residue" evidence="5 6 7 8 10 11 14 15 16 18 19 20 21 22 23 24 25">
    <location>
        <position position="183"/>
    </location>
    <ligand>
        <name>heme b</name>
        <dbReference type="ChEBI" id="CHEBI:60344"/>
        <label>b562</label>
    </ligand>
    <ligandPart>
        <name>Fe</name>
        <dbReference type="ChEBI" id="CHEBI:18248"/>
    </ligandPart>
</feature>
<feature type="binding site" description="axial binding residue" evidence="5 6 7 8 10 11 12 13 14 15 16 17 18 19 20 21 22 23 24 25">
    <location>
        <position position="197"/>
    </location>
    <ligand>
        <name>heme b</name>
        <dbReference type="ChEBI" id="CHEBI:60344"/>
        <label>b566</label>
    </ligand>
    <ligandPart>
        <name>Fe</name>
        <dbReference type="ChEBI" id="CHEBI:18248"/>
    </ligandPart>
</feature>
<feature type="binding site" evidence="6 7 8 10 13 17 21">
    <location>
        <position position="202"/>
    </location>
    <ligand>
        <name>a ubiquinone</name>
        <dbReference type="ChEBI" id="CHEBI:16389"/>
    </ligand>
</feature>
<feature type="turn" evidence="27">
    <location>
        <begin position="5"/>
        <end position="7"/>
    </location>
</feature>
<feature type="helix" evidence="27">
    <location>
        <begin position="12"/>
        <end position="19"/>
    </location>
</feature>
<feature type="strand" evidence="27">
    <location>
        <begin position="23"/>
        <end position="25"/>
    </location>
</feature>
<feature type="helix" evidence="27">
    <location>
        <begin position="30"/>
        <end position="32"/>
    </location>
</feature>
<feature type="helix" evidence="27">
    <location>
        <begin position="34"/>
        <end position="53"/>
    </location>
</feature>
<feature type="turn" evidence="27">
    <location>
        <begin position="60"/>
        <end position="62"/>
    </location>
</feature>
<feature type="helix" evidence="27">
    <location>
        <begin position="63"/>
        <end position="73"/>
    </location>
</feature>
<feature type="helix" evidence="27">
    <location>
        <begin position="77"/>
        <end position="104"/>
    </location>
</feature>
<feature type="helix" evidence="27">
    <location>
        <begin position="107"/>
        <end position="109"/>
    </location>
</feature>
<feature type="helix" evidence="27">
    <location>
        <begin position="111"/>
        <end position="133"/>
    </location>
</feature>
<feature type="helix" evidence="27">
    <location>
        <begin position="138"/>
        <end position="148"/>
    </location>
</feature>
<feature type="helix" evidence="27">
    <location>
        <begin position="149"/>
        <end position="153"/>
    </location>
</feature>
<feature type="strand" evidence="27">
    <location>
        <begin position="154"/>
        <end position="156"/>
    </location>
</feature>
<feature type="helix" evidence="27">
    <location>
        <begin position="157"/>
        <end position="166"/>
    </location>
</feature>
<feature type="strand" evidence="27">
    <location>
        <begin position="168"/>
        <end position="171"/>
    </location>
</feature>
<feature type="helix" evidence="27">
    <location>
        <begin position="173"/>
        <end position="204"/>
    </location>
</feature>
<feature type="helix" evidence="27">
    <location>
        <begin position="215"/>
        <end position="217"/>
    </location>
</feature>
<feature type="strand" evidence="27">
    <location>
        <begin position="218"/>
        <end position="220"/>
    </location>
</feature>
<feature type="helix" evidence="27">
    <location>
        <begin position="221"/>
        <end position="246"/>
    </location>
</feature>
<feature type="strand" evidence="27">
    <location>
        <begin position="250"/>
        <end position="252"/>
    </location>
</feature>
<feature type="helix" evidence="27">
    <location>
        <begin position="254"/>
        <end position="257"/>
    </location>
</feature>
<feature type="helix" evidence="27">
    <location>
        <begin position="273"/>
        <end position="275"/>
    </location>
</feature>
<feature type="helix" evidence="27">
    <location>
        <begin position="276"/>
        <end position="284"/>
    </location>
</feature>
<feature type="strand" evidence="26">
    <location>
        <begin position="285"/>
        <end position="287"/>
    </location>
</feature>
<feature type="helix" evidence="27">
    <location>
        <begin position="288"/>
        <end position="300"/>
    </location>
</feature>
<feature type="helix" evidence="27">
    <location>
        <begin position="301"/>
        <end position="303"/>
    </location>
</feature>
<feature type="helix" evidence="27">
    <location>
        <begin position="305"/>
        <end position="307"/>
    </location>
</feature>
<feature type="strand" evidence="27">
    <location>
        <begin position="312"/>
        <end position="316"/>
    </location>
</feature>
<feature type="helix" evidence="27">
    <location>
        <begin position="320"/>
        <end position="341"/>
    </location>
</feature>
<feature type="helix" evidence="27">
    <location>
        <begin position="348"/>
        <end position="364"/>
    </location>
</feature>
<feature type="helix" evidence="27">
    <location>
        <begin position="366"/>
        <end position="377"/>
    </location>
</feature>
<reference key="1">
    <citation type="journal article" date="1990" name="J. Mol. Biol.">
        <title>Sequence and gene organization of the chicken mitochondrial genome. A novel gene order in higher vertebrates.</title>
        <authorList>
            <person name="Desjardins P."/>
            <person name="Morais R."/>
        </authorList>
    </citation>
    <scope>NUCLEOTIDE SEQUENCE [GENOMIC DNA]</scope>
    <source>
        <strain evidence="9">Red jungle fowl</strain>
    </source>
</reference>
<reference key="2">
    <citation type="journal article" date="1993" name="J. Mol. Evol.">
        <title>Pathways of lysozyme evolution inferred from the sequences of cytochrome b in birds.</title>
        <authorList>
            <person name="Kornegay J.R."/>
            <person name="Kocher T.D."/>
            <person name="Williams L.A."/>
            <person name="Wilson A.C."/>
        </authorList>
    </citation>
    <scope>NUCLEOTIDE SEQUENCE [GENOMIC DNA]</scope>
    <source>
        <tissue>Liver</tissue>
    </source>
</reference>
<reference evidence="10 11 12 14 15 16" key="3">
    <citation type="journal article" date="1998" name="Nature">
        <title>Electron transfer by domain movement in cytochrome bc1.</title>
        <authorList>
            <person name="Zhang Z."/>
            <person name="Huang L."/>
            <person name="Shulmeister V.M."/>
            <person name="Chi Y.I."/>
            <person name="Kim K.K."/>
            <person name="Hung L.W."/>
            <person name="Crofts A.R."/>
            <person name="Berry E.A."/>
            <person name="Kim S.H."/>
        </authorList>
    </citation>
    <scope>X-RAY CRYSTALLOGRAPHY (3.00 ANGSTROMS) IN COMPLEX WITH HEME AND UBIQUINONE</scope>
    <scope>TOPOLOGY</scope>
    <scope>COFACTOR</scope>
    <scope>SUBUNIT</scope>
</reference>
<reference evidence="18" key="4">
    <citation type="journal article" date="2010" name="Biochim. Biophys. Acta">
        <title>Ascochlorin is a novel, specific inhibitor of the mitochondrial cytochrome bc1 complex.</title>
        <authorList>
            <person name="Berry E.A."/>
            <person name="Huang L.S."/>
            <person name="Lee D.W."/>
            <person name="Daldal F."/>
            <person name="Nagai K."/>
            <person name="Minagawa N."/>
        </authorList>
    </citation>
    <scope>X-RAY CRYSTALLOGRAPHY (3.21 ANGSTROMS) IN COMPLEX WITH HEME</scope>
    <scope>TOPOLOGY</scope>
    <scope>COFACTOR</scope>
    <scope>SUBUNIT</scope>
</reference>
<reference evidence="19" key="5">
    <citation type="journal article" date="2011" name="Biochim. Biophys. Acta">
        <title>Conformationally linked interaction in the cytochrome bc(1) complex between inhibitors of the Q(o) site and the Rieske iron-sulfur protein.</title>
        <authorList>
            <person name="Berry E.A."/>
            <person name="Huang L.S."/>
        </authorList>
    </citation>
    <scope>X-RAY CRYSTALLOGRAPHY (2.75 ANGSTROMS) IN COMPLEX WITH HEME AND UBIQUINONE</scope>
    <scope>TOPOLOGY</scope>
    <scope>COFACTOR</scope>
    <scope>SUBUNIT</scope>
</reference>
<reference evidence="25" key="6">
    <citation type="journal article" date="2012" name="J. Am. Chem. Soc.">
        <title>Computational discovery of picomolar Q(o) site inhibitors of cytochrome bc1 complex.</title>
        <authorList>
            <person name="Hao G.F."/>
            <person name="Wang F."/>
            <person name="Li H."/>
            <person name="Zhu X.L."/>
            <person name="Yang W.C."/>
            <person name="Huang L.S."/>
            <person name="Wu J.W."/>
            <person name="Berry E.A."/>
            <person name="Yang G.F."/>
        </authorList>
    </citation>
    <scope>X-RAY CRYSTALLOGRAPHY (2.70 ANGSTROMS) IN COMPLEX WITH HEME AND UBIQUINONE</scope>
    <scope>TOPOLOGY</scope>
    <scope>COFACTOR</scope>
    <scope>SUBUNIT</scope>
</reference>
<name>CYB_CHICK</name>
<proteinExistence type="evidence at protein level"/>
<organism>
    <name type="scientific">Gallus gallus</name>
    <name type="common">Chicken</name>
    <dbReference type="NCBI Taxonomy" id="9031"/>
    <lineage>
        <taxon>Eukaryota</taxon>
        <taxon>Metazoa</taxon>
        <taxon>Chordata</taxon>
        <taxon>Craniata</taxon>
        <taxon>Vertebrata</taxon>
        <taxon>Euteleostomi</taxon>
        <taxon>Archelosauria</taxon>
        <taxon>Archosauria</taxon>
        <taxon>Dinosauria</taxon>
        <taxon>Saurischia</taxon>
        <taxon>Theropoda</taxon>
        <taxon>Coelurosauria</taxon>
        <taxon>Aves</taxon>
        <taxon>Neognathae</taxon>
        <taxon>Galloanserae</taxon>
        <taxon>Galliformes</taxon>
        <taxon>Phasianidae</taxon>
        <taxon>Phasianinae</taxon>
        <taxon>Gallus</taxon>
    </lineage>
</organism>
<evidence type="ECO:0000250" key="1"/>
<evidence type="ECO:0000250" key="2">
    <source>
        <dbReference type="UniProtKB" id="P00157"/>
    </source>
</evidence>
<evidence type="ECO:0000255" key="3">
    <source>
        <dbReference type="PROSITE-ProRule" id="PRU00967"/>
    </source>
</evidence>
<evidence type="ECO:0000255" key="4">
    <source>
        <dbReference type="PROSITE-ProRule" id="PRU00968"/>
    </source>
</evidence>
<evidence type="ECO:0000269" key="5">
    <source>
    </source>
</evidence>
<evidence type="ECO:0000269" key="6">
    <source>
    </source>
</evidence>
<evidence type="ECO:0000269" key="7">
    <source>
    </source>
</evidence>
<evidence type="ECO:0000269" key="8">
    <source>
    </source>
</evidence>
<evidence type="ECO:0000312" key="9">
    <source>
        <dbReference type="Proteomes" id="UP000000539"/>
    </source>
</evidence>
<evidence type="ECO:0007744" key="10">
    <source>
        <dbReference type="PDB" id="1BCC"/>
    </source>
</evidence>
<evidence type="ECO:0007744" key="11">
    <source>
        <dbReference type="PDB" id="2BCC"/>
    </source>
</evidence>
<evidence type="ECO:0007744" key="12">
    <source>
        <dbReference type="PDB" id="3BCC"/>
    </source>
</evidence>
<evidence type="ECO:0007744" key="13">
    <source>
        <dbReference type="PDB" id="3CWB"/>
    </source>
</evidence>
<evidence type="ECO:0007744" key="14">
    <source>
        <dbReference type="PDB" id="3H1H"/>
    </source>
</evidence>
<evidence type="ECO:0007744" key="15">
    <source>
        <dbReference type="PDB" id="3H1I"/>
    </source>
</evidence>
<evidence type="ECO:0007744" key="16">
    <source>
        <dbReference type="PDB" id="3H1J"/>
    </source>
</evidence>
<evidence type="ECO:0007744" key="17">
    <source>
        <dbReference type="PDB" id="3H1K"/>
    </source>
</evidence>
<evidence type="ECO:0007744" key="18">
    <source>
        <dbReference type="PDB" id="3H1L"/>
    </source>
</evidence>
<evidence type="ECO:0007744" key="19">
    <source>
        <dbReference type="PDB" id="3L70"/>
    </source>
</evidence>
<evidence type="ECO:0007744" key="20">
    <source>
        <dbReference type="PDB" id="3L71"/>
    </source>
</evidence>
<evidence type="ECO:0007744" key="21">
    <source>
        <dbReference type="PDB" id="3L72"/>
    </source>
</evidence>
<evidence type="ECO:0007744" key="22">
    <source>
        <dbReference type="PDB" id="3L73"/>
    </source>
</evidence>
<evidence type="ECO:0007744" key="23">
    <source>
        <dbReference type="PDB" id="3L74"/>
    </source>
</evidence>
<evidence type="ECO:0007744" key="24">
    <source>
        <dbReference type="PDB" id="3L75"/>
    </source>
</evidence>
<evidence type="ECO:0007744" key="25">
    <source>
        <dbReference type="PDB" id="3TGU"/>
    </source>
</evidence>
<evidence type="ECO:0007829" key="26">
    <source>
        <dbReference type="PDB" id="3L74"/>
    </source>
</evidence>
<evidence type="ECO:0007829" key="27">
    <source>
        <dbReference type="PDB" id="3TGU"/>
    </source>
</evidence>
<geneLocation type="mitochondrion"/>
<comment type="function">
    <text evidence="2">Component of the ubiquinol-cytochrome c reductase complex (complex III or cytochrome b-c1 complex) that is part of the mitochondrial respiratory chain. The b-c1 complex mediates electron transfer from ubiquinol to cytochrome c. Contributes to the generation of a proton gradient across the mitochondrial membrane that is then used for ATP synthesis.</text>
</comment>
<comment type="cofactor">
    <cofactor evidence="5 6 7 8">
        <name>heme b</name>
        <dbReference type="ChEBI" id="CHEBI:60344"/>
    </cofactor>
    <text evidence="5 6 7 8">Binds 2 heme b groups non-covalently.</text>
</comment>
<comment type="subunit">
    <text evidence="5 6 7 8">The cytochrome bc1 complex contains 11 subunits: 3 respiratory subunits (MT-CYB, CYC1 and UQCRFS1), 2 core proteins (UQCRC1 and UQCRC2) and 6 low-molecular weight proteins (UQCRH/QCR6, UQCRB/QCR7, UQCRQ/QCR8, UQCR10/QCR9, UQCR11/QCR10 and a cleavage product of UQCRFS1). This cytochrome bc1 complex then forms a dimer.</text>
</comment>
<comment type="subcellular location">
    <subcellularLocation>
        <location evidence="2">Mitochondrion inner membrane</location>
        <topology evidence="5 6 7 8">Multi-pass membrane protein</topology>
    </subcellularLocation>
</comment>
<comment type="miscellaneous">
    <text evidence="1">Heme 1 (or BL or b562) is low-potential and absorbs at about 562 nm, and heme 2 (or BH or b566) is high-potential and absorbs at about 566 nm.</text>
</comment>
<comment type="similarity">
    <text evidence="3 4">Belongs to the cytochrome b family.</text>
</comment>
<comment type="caution">
    <text evidence="5 6 7 8">The full-length protein contains only eight transmembrane helices, not nine as predicted by bioinformatics tools.</text>
</comment>
<dbReference type="EMBL" id="X52392">
    <property type="protein sequence ID" value="CAA36636.1"/>
    <property type="molecule type" value="Genomic_DNA"/>
</dbReference>
<dbReference type="EMBL" id="L08376">
    <property type="protein sequence ID" value="AAA18844.1"/>
    <property type="molecule type" value="Genomic_DNA"/>
</dbReference>
<dbReference type="PIR" id="S10198">
    <property type="entry name" value="S10198"/>
</dbReference>
<dbReference type="RefSeq" id="NP_006926.1">
    <property type="nucleotide sequence ID" value="NC_001323.1"/>
</dbReference>
<dbReference type="PDB" id="1BCC">
    <property type="method" value="X-ray"/>
    <property type="resolution" value="3.16 A"/>
    <property type="chains" value="C=1-380"/>
</dbReference>
<dbReference type="PDB" id="2BCC">
    <property type="method" value="X-ray"/>
    <property type="resolution" value="3.50 A"/>
    <property type="chains" value="C=1-380"/>
</dbReference>
<dbReference type="PDB" id="3BCC">
    <property type="method" value="X-ray"/>
    <property type="resolution" value="3.70 A"/>
    <property type="chains" value="C=1-380"/>
</dbReference>
<dbReference type="PDB" id="3CWB">
    <property type="method" value="X-ray"/>
    <property type="resolution" value="3.51 A"/>
    <property type="chains" value="C/P=1-380"/>
</dbReference>
<dbReference type="PDB" id="3H1H">
    <property type="method" value="X-ray"/>
    <property type="resolution" value="3.16 A"/>
    <property type="chains" value="C/P=1-380"/>
</dbReference>
<dbReference type="PDB" id="3H1I">
    <property type="method" value="X-ray"/>
    <property type="resolution" value="3.53 A"/>
    <property type="chains" value="C/P=1-380"/>
</dbReference>
<dbReference type="PDB" id="3H1J">
    <property type="method" value="X-ray"/>
    <property type="resolution" value="3.00 A"/>
    <property type="chains" value="C/P=1-380"/>
</dbReference>
<dbReference type="PDB" id="3H1K">
    <property type="method" value="X-ray"/>
    <property type="resolution" value="3.48 A"/>
    <property type="chains" value="C/P=1-380"/>
</dbReference>
<dbReference type="PDB" id="3H1L">
    <property type="method" value="X-ray"/>
    <property type="resolution" value="3.21 A"/>
    <property type="chains" value="C/P=1-380"/>
</dbReference>
<dbReference type="PDB" id="3L70">
    <property type="method" value="X-ray"/>
    <property type="resolution" value="2.75 A"/>
    <property type="chains" value="C/P=1-380"/>
</dbReference>
<dbReference type="PDB" id="3L71">
    <property type="method" value="X-ray"/>
    <property type="resolution" value="2.84 A"/>
    <property type="chains" value="C/P=1-380"/>
</dbReference>
<dbReference type="PDB" id="3L72">
    <property type="method" value="X-ray"/>
    <property type="resolution" value="3.06 A"/>
    <property type="chains" value="C/P=1-380"/>
</dbReference>
<dbReference type="PDB" id="3L73">
    <property type="method" value="X-ray"/>
    <property type="resolution" value="3.04 A"/>
    <property type="chains" value="C/P=1-380"/>
</dbReference>
<dbReference type="PDB" id="3L74">
    <property type="method" value="X-ray"/>
    <property type="resolution" value="2.76 A"/>
    <property type="chains" value="C/P=1-380"/>
</dbReference>
<dbReference type="PDB" id="3L75">
    <property type="method" value="X-ray"/>
    <property type="resolution" value="2.79 A"/>
    <property type="chains" value="C/P=1-380"/>
</dbReference>
<dbReference type="PDB" id="3TGU">
    <property type="method" value="X-ray"/>
    <property type="resolution" value="2.70 A"/>
    <property type="chains" value="C/P=1-380"/>
</dbReference>
<dbReference type="PDB" id="4U3F">
    <property type="method" value="X-ray"/>
    <property type="resolution" value="3.23 A"/>
    <property type="chains" value="C/P=2-380"/>
</dbReference>
<dbReference type="PDBsum" id="1BCC"/>
<dbReference type="PDBsum" id="2BCC"/>
<dbReference type="PDBsum" id="3BCC"/>
<dbReference type="PDBsum" id="3CWB"/>
<dbReference type="PDBsum" id="3H1H"/>
<dbReference type="PDBsum" id="3H1I"/>
<dbReference type="PDBsum" id="3H1J"/>
<dbReference type="PDBsum" id="3H1K"/>
<dbReference type="PDBsum" id="3H1L"/>
<dbReference type="PDBsum" id="3L70"/>
<dbReference type="PDBsum" id="3L71"/>
<dbReference type="PDBsum" id="3L72"/>
<dbReference type="PDBsum" id="3L73"/>
<dbReference type="PDBsum" id="3L74"/>
<dbReference type="PDBsum" id="3L75"/>
<dbReference type="PDBsum" id="3TGU"/>
<dbReference type="PDBsum" id="4U3F"/>
<dbReference type="SMR" id="P18946"/>
<dbReference type="FunCoup" id="P18946">
    <property type="interactions" value="15"/>
</dbReference>
<dbReference type="STRING" id="9031.ENSGALP00000049893"/>
<dbReference type="PaxDb" id="9031-ENSGALP00000034623"/>
<dbReference type="VEuPathDB" id="HostDB:geneid_63549472"/>
<dbReference type="eggNOG" id="KOG4663">
    <property type="taxonomic scope" value="Eukaryota"/>
</dbReference>
<dbReference type="HOGENOM" id="CLU_031114_3_0_1"/>
<dbReference type="InParanoid" id="P18946"/>
<dbReference type="PhylomeDB" id="P18946"/>
<dbReference type="TreeFam" id="TF353088"/>
<dbReference type="Reactome" id="R-GGA-611105">
    <property type="pathway name" value="Respiratory electron transport"/>
</dbReference>
<dbReference type="Reactome" id="R-GGA-9865881">
    <property type="pathway name" value="Complex III assembly"/>
</dbReference>
<dbReference type="EvolutionaryTrace" id="P18946"/>
<dbReference type="PRO" id="PR:P18946"/>
<dbReference type="Proteomes" id="UP000000539">
    <property type="component" value="Mitochondrion MT"/>
</dbReference>
<dbReference type="Bgee" id="ENSGALG00000032079">
    <property type="expression patterns" value="Expressed in spermatocyte and 13 other cell types or tissues"/>
</dbReference>
<dbReference type="GO" id="GO:0005737">
    <property type="term" value="C:cytoplasm"/>
    <property type="evidence" value="ECO:0000315"/>
    <property type="project" value="AgBase"/>
</dbReference>
<dbReference type="GO" id="GO:0016020">
    <property type="term" value="C:membrane"/>
    <property type="evidence" value="ECO:0000318"/>
    <property type="project" value="GO_Central"/>
</dbReference>
<dbReference type="GO" id="GO:0005743">
    <property type="term" value="C:mitochondrial inner membrane"/>
    <property type="evidence" value="ECO:0007669"/>
    <property type="project" value="UniProtKB-SubCell"/>
</dbReference>
<dbReference type="GO" id="GO:0005739">
    <property type="term" value="C:mitochondrion"/>
    <property type="evidence" value="ECO:0000314"/>
    <property type="project" value="AgBase"/>
</dbReference>
<dbReference type="GO" id="GO:0045275">
    <property type="term" value="C:respiratory chain complex III"/>
    <property type="evidence" value="ECO:0000314"/>
    <property type="project" value="UniProtKB"/>
</dbReference>
<dbReference type="GO" id="GO:0020037">
    <property type="term" value="F:heme binding"/>
    <property type="evidence" value="ECO:0000314"/>
    <property type="project" value="UniProtKB"/>
</dbReference>
<dbReference type="GO" id="GO:0046872">
    <property type="term" value="F:metal ion binding"/>
    <property type="evidence" value="ECO:0007669"/>
    <property type="project" value="UniProtKB-KW"/>
</dbReference>
<dbReference type="GO" id="GO:0008121">
    <property type="term" value="F:ubiquinol-cytochrome-c reductase activity"/>
    <property type="evidence" value="ECO:0007669"/>
    <property type="project" value="InterPro"/>
</dbReference>
<dbReference type="GO" id="GO:0006122">
    <property type="term" value="P:mitochondrial electron transport, ubiquinol to cytochrome c"/>
    <property type="evidence" value="ECO:0000318"/>
    <property type="project" value="GO_Central"/>
</dbReference>
<dbReference type="GO" id="GO:0022904">
    <property type="term" value="P:respiratory electron transport chain"/>
    <property type="evidence" value="ECO:0000303"/>
    <property type="project" value="AgBase"/>
</dbReference>
<dbReference type="GO" id="GO:0006979">
    <property type="term" value="P:response to oxidative stress"/>
    <property type="evidence" value="ECO:0000270"/>
    <property type="project" value="AgBase"/>
</dbReference>
<dbReference type="CDD" id="cd00290">
    <property type="entry name" value="cytochrome_b_C"/>
    <property type="match status" value="1"/>
</dbReference>
<dbReference type="CDD" id="cd00284">
    <property type="entry name" value="Cytochrome_b_N"/>
    <property type="match status" value="1"/>
</dbReference>
<dbReference type="FunFam" id="1.20.810.10:FF:000002">
    <property type="entry name" value="Cytochrome b"/>
    <property type="match status" value="1"/>
</dbReference>
<dbReference type="Gene3D" id="1.20.810.10">
    <property type="entry name" value="Cytochrome Bc1 Complex, Chain C"/>
    <property type="match status" value="1"/>
</dbReference>
<dbReference type="InterPro" id="IPR005798">
    <property type="entry name" value="Cyt_b/b6_C"/>
</dbReference>
<dbReference type="InterPro" id="IPR036150">
    <property type="entry name" value="Cyt_b/b6_C_sf"/>
</dbReference>
<dbReference type="InterPro" id="IPR005797">
    <property type="entry name" value="Cyt_b/b6_N"/>
</dbReference>
<dbReference type="InterPro" id="IPR027387">
    <property type="entry name" value="Cytb/b6-like_sf"/>
</dbReference>
<dbReference type="InterPro" id="IPR030689">
    <property type="entry name" value="Cytochrome_b"/>
</dbReference>
<dbReference type="InterPro" id="IPR048260">
    <property type="entry name" value="Cytochrome_b_C_euk/bac"/>
</dbReference>
<dbReference type="InterPro" id="IPR048259">
    <property type="entry name" value="Cytochrome_b_N_euk/bac"/>
</dbReference>
<dbReference type="InterPro" id="IPR016174">
    <property type="entry name" value="Di-haem_cyt_TM"/>
</dbReference>
<dbReference type="PANTHER" id="PTHR19271">
    <property type="entry name" value="CYTOCHROME B"/>
    <property type="match status" value="1"/>
</dbReference>
<dbReference type="PANTHER" id="PTHR19271:SF16">
    <property type="entry name" value="CYTOCHROME B"/>
    <property type="match status" value="1"/>
</dbReference>
<dbReference type="Pfam" id="PF00032">
    <property type="entry name" value="Cytochrom_B_C"/>
    <property type="match status" value="1"/>
</dbReference>
<dbReference type="Pfam" id="PF00033">
    <property type="entry name" value="Cytochrome_B"/>
    <property type="match status" value="1"/>
</dbReference>
<dbReference type="PIRSF" id="PIRSF038885">
    <property type="entry name" value="COB"/>
    <property type="match status" value="1"/>
</dbReference>
<dbReference type="SUPFAM" id="SSF81648">
    <property type="entry name" value="a domain/subunit of cytochrome bc1 complex (Ubiquinol-cytochrome c reductase)"/>
    <property type="match status" value="1"/>
</dbReference>
<dbReference type="SUPFAM" id="SSF81342">
    <property type="entry name" value="Transmembrane di-heme cytochromes"/>
    <property type="match status" value="1"/>
</dbReference>
<dbReference type="PROSITE" id="PS51003">
    <property type="entry name" value="CYTB_CTER"/>
    <property type="match status" value="1"/>
</dbReference>
<dbReference type="PROSITE" id="PS51002">
    <property type="entry name" value="CYTB_NTER"/>
    <property type="match status" value="1"/>
</dbReference>
<accession>P18946</accession>
<sequence length="380" mass="42592">MAPNIRKSHPLLKMINNSLIDLPAPSNISAWWNFGSLLAVCLMTQILTGLLLAMHYTADTSLAFSSVAHTCRNVQYGWLIRNLHANGASFFFICIFLHIGRGLYYGSYLYKETWNTGVILLLTLMATAFVGYVLPWGQMSFWGATVITNLFSAIPYIGHTLVEWAWGGFSVDNPTLTRFFALHFLLPFAIAGITIIHLTFLHESGSNNPLGISSDSDKIPFHPYYSFKDILGLTLMLTPFLTLALFSPNLLGDPENFTPANPLVTPPHIKPEWYFLFAYAILRSIPNKLGGVLALAASVLILFLIPFLHKSKQRTMTFRPLSQTLFWLLVANLLILTWIGSQPVEHPFIIIGQMASLSYFTILLILFPTIGTLENKMLNY</sequence>
<keyword id="KW-0002">3D-structure</keyword>
<keyword id="KW-0249">Electron transport</keyword>
<keyword id="KW-0349">Heme</keyword>
<keyword id="KW-0408">Iron</keyword>
<keyword id="KW-0472">Membrane</keyword>
<keyword id="KW-0479">Metal-binding</keyword>
<keyword id="KW-0496">Mitochondrion</keyword>
<keyword id="KW-0999">Mitochondrion inner membrane</keyword>
<keyword id="KW-1185">Reference proteome</keyword>
<keyword id="KW-0679">Respiratory chain</keyword>
<keyword id="KW-0812">Transmembrane</keyword>
<keyword id="KW-1133">Transmembrane helix</keyword>
<keyword id="KW-0813">Transport</keyword>
<keyword id="KW-0830">Ubiquinone</keyword>